<organism>
    <name type="scientific">Salmonella schwarzengrund (strain CVM19633)</name>
    <dbReference type="NCBI Taxonomy" id="439843"/>
    <lineage>
        <taxon>Bacteria</taxon>
        <taxon>Pseudomonadati</taxon>
        <taxon>Pseudomonadota</taxon>
        <taxon>Gammaproteobacteria</taxon>
        <taxon>Enterobacterales</taxon>
        <taxon>Enterobacteriaceae</taxon>
        <taxon>Salmonella</taxon>
    </lineage>
</organism>
<name>FETP_SALSV</name>
<dbReference type="EMBL" id="CP001127">
    <property type="protein sequence ID" value="ACF89012.1"/>
    <property type="molecule type" value="Genomic_DNA"/>
</dbReference>
<dbReference type="RefSeq" id="WP_000091706.1">
    <property type="nucleotide sequence ID" value="NC_011094.1"/>
</dbReference>
<dbReference type="BMRB" id="B4TV80"/>
<dbReference type="SMR" id="B4TV80"/>
<dbReference type="KEGG" id="sew:SeSA_A3285"/>
<dbReference type="HOGENOM" id="CLU_170994_0_0_6"/>
<dbReference type="Proteomes" id="UP000001865">
    <property type="component" value="Chromosome"/>
</dbReference>
<dbReference type="GO" id="GO:0005829">
    <property type="term" value="C:cytosol"/>
    <property type="evidence" value="ECO:0007669"/>
    <property type="project" value="TreeGrafter"/>
</dbReference>
<dbReference type="GO" id="GO:0005506">
    <property type="term" value="F:iron ion binding"/>
    <property type="evidence" value="ECO:0007669"/>
    <property type="project" value="UniProtKB-UniRule"/>
</dbReference>
<dbReference type="GO" id="GO:0034599">
    <property type="term" value="P:cellular response to oxidative stress"/>
    <property type="evidence" value="ECO:0007669"/>
    <property type="project" value="TreeGrafter"/>
</dbReference>
<dbReference type="FunFam" id="1.10.3880.10:FF:000001">
    <property type="entry name" value="Probable Fe(2+)-trafficking protein"/>
    <property type="match status" value="1"/>
</dbReference>
<dbReference type="Gene3D" id="1.10.3880.10">
    <property type="entry name" value="Fe(II) trafficking protein YggX"/>
    <property type="match status" value="1"/>
</dbReference>
<dbReference type="HAMAP" id="MF_00686">
    <property type="entry name" value="Fe_traffic_YggX"/>
    <property type="match status" value="1"/>
</dbReference>
<dbReference type="InterPro" id="IPR007457">
    <property type="entry name" value="Fe_traffick_prot_YggX"/>
</dbReference>
<dbReference type="InterPro" id="IPR036766">
    <property type="entry name" value="Fe_traffick_prot_YggX_sf"/>
</dbReference>
<dbReference type="NCBIfam" id="NF003817">
    <property type="entry name" value="PRK05408.1"/>
    <property type="match status" value="1"/>
</dbReference>
<dbReference type="PANTHER" id="PTHR36965">
    <property type="entry name" value="FE(2+)-TRAFFICKING PROTEIN-RELATED"/>
    <property type="match status" value="1"/>
</dbReference>
<dbReference type="PANTHER" id="PTHR36965:SF1">
    <property type="entry name" value="FE(2+)-TRAFFICKING PROTEIN-RELATED"/>
    <property type="match status" value="1"/>
</dbReference>
<dbReference type="Pfam" id="PF04362">
    <property type="entry name" value="Iron_traffic"/>
    <property type="match status" value="1"/>
</dbReference>
<dbReference type="PIRSF" id="PIRSF029827">
    <property type="entry name" value="Fe_traffic_YggX"/>
    <property type="match status" value="1"/>
</dbReference>
<dbReference type="SUPFAM" id="SSF111148">
    <property type="entry name" value="YggX-like"/>
    <property type="match status" value="1"/>
</dbReference>
<protein>
    <recommendedName>
        <fullName evidence="1">Probable Fe(2+)-trafficking protein</fullName>
    </recommendedName>
</protein>
<sequence>MSRTIFCTYLQRDAEGQDFQLYPGELGKRIYNEISKDAWAQWQHKQTMLINEKKLNMMNAEHRKLLEQEMVSFLFEGKDVHIEGYTPEDKK</sequence>
<feature type="chain" id="PRO_1000131864" description="Probable Fe(2+)-trafficking protein">
    <location>
        <begin position="1"/>
        <end position="91"/>
    </location>
</feature>
<comment type="function">
    <text evidence="1">Could be a mediator in iron transactions between iron acquisition and iron-requiring processes, such as synthesis and/or repair of Fe-S clusters in biosynthetic enzymes.</text>
</comment>
<comment type="subunit">
    <text evidence="1">Monomer.</text>
</comment>
<comment type="similarity">
    <text evidence="1">Belongs to the Fe(2+)-trafficking protein family.</text>
</comment>
<proteinExistence type="inferred from homology"/>
<reference key="1">
    <citation type="journal article" date="2011" name="J. Bacteriol.">
        <title>Comparative genomics of 28 Salmonella enterica isolates: evidence for CRISPR-mediated adaptive sublineage evolution.</title>
        <authorList>
            <person name="Fricke W.F."/>
            <person name="Mammel M.K."/>
            <person name="McDermott P.F."/>
            <person name="Tartera C."/>
            <person name="White D.G."/>
            <person name="Leclerc J.E."/>
            <person name="Ravel J."/>
            <person name="Cebula T.A."/>
        </authorList>
    </citation>
    <scope>NUCLEOTIDE SEQUENCE [LARGE SCALE GENOMIC DNA]</scope>
    <source>
        <strain>CVM19633</strain>
    </source>
</reference>
<evidence type="ECO:0000255" key="1">
    <source>
        <dbReference type="HAMAP-Rule" id="MF_00686"/>
    </source>
</evidence>
<keyword id="KW-0408">Iron</keyword>
<accession>B4TV80</accession>
<gene>
    <name evidence="1" type="primary">yggX</name>
    <name type="ordered locus">SeSA_A3285</name>
</gene>